<protein>
    <recommendedName>
        <fullName>RNA-directed RNA polymerase L</fullName>
        <shortName>Protein L</shortName>
    </recommendedName>
    <alternativeName>
        <fullName>Large structural protein</fullName>
    </alternativeName>
    <alternativeName>
        <fullName>Replicase</fullName>
    </alternativeName>
    <alternativeName>
        <fullName>Transcriptase</fullName>
    </alternativeName>
    <domain>
        <recommendedName>
            <fullName>RNA-directed RNA polymerase</fullName>
            <ecNumber evidence="2">2.7.7.48</ecNumber>
        </recommendedName>
    </domain>
    <domain>
        <recommendedName>
            <fullName evidence="2">GTP phosphohydrolase</fullName>
            <ecNumber evidence="2">3.6.1.-</ecNumber>
        </recommendedName>
    </domain>
    <domain>
        <recommendedName>
            <fullName evidence="6">GDP polyribonucleotidyltransferase</fullName>
            <ecNumber evidence="2">2.7.7.88</ecNumber>
        </recommendedName>
        <alternativeName>
            <fullName evidence="6">PRNTase</fullName>
        </alternativeName>
    </domain>
    <domain>
        <recommendedName>
            <fullName evidence="6">mRNA cap methyltransferase</fullName>
            <ecNumber evidence="1">2.1.1.375</ecNumber>
        </recommendedName>
        <alternativeName>
            <fullName evidence="1">mRNA (guanine-N(7)-)-methyltransferase</fullName>
            <shortName evidence="1">G-N7-MTase</shortName>
        </alternativeName>
        <alternativeName>
            <fullName evidence="1">mRNA (nucleoside-2'-O-)-methyltransferase</fullName>
            <shortName evidence="1">N1-2'-O-MTase</shortName>
        </alternativeName>
    </domain>
</protein>
<sequence length="2040" mass="234515">MDPIDEQEVNVYLPDSYLKGVISFSETNALGSCIIGRPFLKDDFTATTSIRNPLIEHKRIRDTKLVKNIVSNPQYRLVEPLQMQHELLSVLSPNFILHTANLRKIIQRSVDITDKKLNPILHILNLNSPNQEGKVSERLTRLIKKHLSHIPNWVSSWYNIWVNLNNLLQEYRSKEVIDHNCVLTRQLSGSFIHVVMSQYGVVIISKKSKRYTMCTYNQFLTWKDLALSRFNANYVVWLSNVLNTLNEGLGLRCRLKGHLLSKLYISTDIFLSSTSNEFYNVVKEFEGFIMSLILKQTEEALFSTRFYNNMLNNLIDAIDRARLEYLARCANSAARINLPSTDVMIASLGDILSLINVLGESNLNNLSELYFIFRIFGHPMVDERKAMDAVRDNCCETKFLTAKNLASLRGAYVYRIIKGFVANYNRWPYIKTRVCLTPTWINYLDTNSCPSLLEMTEDDFIVLAGVHFIREFHIPKLTDLEIILNDKAISPPKSLIWSCFPKNYIPQVIQDEYARRYCRAKAPLKTRRVLEFYLQDKDFKLDQLHRVVVNQDYLNDKEHIISLTGKERELGVGRMFAMQPGKQRQVQILAEKLLADNILQFFPETLTRYGDLELQKILELKAGLSNKNDRSKDSYNNYISRCSLITDLSKFNQAFRYESSCVCSDLLDELHGTQSLFSWLHLTVPLTTIMCTYRHAPPDTGNNYNVDDIAEQSGLYRYHMGGIEGWCQKLWTTEAIALLDTVAVKGRFQLTSLINGDNQSIDISKPTRLGTRTQSEADYDLAINSLRLISAAYKGIGHKLKEGETYLSRDMQFMSKTIQHEGVYYPASIKKILRVGPWINTILDDIKTSTESIGSLTQELEYKGESLMSSLLLRNFWLYRLYSVDLKDHSLCGKQLYRSLIKVLKHLKRCFNLENLGECLELFLNVPMQFGGADPNVIYRSFYRRTPDFLTESITHLILILKHFRRDLEFNKDNVSKAVLSLLEFTKNDSAEFVTLMRDPQAIGSERQAKITSDINRTAVTSVLSNAPNEIFRTSALHYSSTENELNGIASGVSPVYPHGLRVLYESLPFYKAEKIVNMVSGTKSITNILEKTSAISYTDIIRATNMMVENLTLLTRIMKPGADTSLDPDTIVITILSKIIRDKSWDVGDIIGVTSPSPVSCFKVVYTSTLQNNSVVIERYTTDTYTRGKRGPTKPWVGSSTQEKKSMPVYNRQVLTRGQRDQIENIAKLEWVFSSVANIDSLLNELSTMTLGLSLRKCRQLFPTYLSLNFLHRLSVSSRPREYPSSLPAYRTTNFHFDTGPINKVLTERFGDEDINLVFQNAISYGLSTMSLVEQFTGVCPNKVLLVPKLQEIQLMKVPIFQGGFNLQSIIPIIRQQHMFLPNHITPAQYIELFLSSKQFHSRINLKHNNRFKLVLQKDYFNGENMIETLSTCLAGHWIIILMLMKESQGIFDKEWYDGFVTDHMFLDLQLFLSSFKTFLTVFNFAYLKVGSNIEEITGNQANLLELLDLGYWKNMYKVFSETKVRLALLKQDLSFNSVKNSSSFRHWFINSLQEVQCTSVPWVVNVTRNPTHLKGVLQYMKMIESGMIQGYSANISSVLSIPYNYPDMAHMMTKIIRNRGHMSYDYPKMKKSLTFSMTDMSDSYMLNLFPKVECSYMSGYLDKLDDTLQLLKKPPVGRKVPSVALPWHHCNRYNFVFSSTGCKVSVIDMLPKHFRRSNLKVICFIGEGAGNLMLRAVLEVGGNIKLIYRSLKDPDDHHVPVEFLRLKPCYPYIDTGGSLSLASTDATNKAHWDYLHLHWTDPLNLIVCDAEISGVKHWLKILHRWYEHMTSCKHCLKSEHDKYLIIKYHAQDDLIDLPHGVRLLKCNICLGSKLSGSESYLLIGLGLSNKLPVYSEVLHSKLLLAECHQFHHPKYLDVSGINTNIKSLIPMLDYPITYNKITTLLESVRELSSNKNKNTMWIGRNPVYHNKWLKRKYFNILKWLKYCIELPAFRMDYNSFERIEMLYPNLRDLVDSVSTSELKKVIKVTGILFRSNTM</sequence>
<comment type="function">
    <text evidence="1 2">Responsible for RNA synthesis (replicase and transcriptase), cap addition, and cap methylation. Also performs the polyadenylation of subgenomic mRNAs by a stuttering mechanism at a slipery stop site present at the end of viral genes. The template is composed of the viral RNA tightly encapsidated by the nucleoprotein (N). The viral polymerase binds to the genomic RNA at two different sites in the 3' leader promoter thereby initiating either genome replication or mRNA transcription. In the transcription mode, the polymerase performs the sequential transcription of all mRNAs using a termination-reinitiation mechanism responding to gene start and gene end signals. Some polymerase disengage from the template at each gene junction, resulting in a decreasing abundance of transcripts from the 3' to the 5' end of the genome. The first gene is the most transcribed, and the last the least transcribed. Needs as cofactors the phosphoprotein for processivity and the M2-1 anti-termination protein. Polyribonucleotidyl transferase (PRNTase) adds the cap structure when the nascent RNA chain length has reached few nucleotides (By similarity). Ribose 2'-O methylation of viral mRNA cap precedes and facilitates subsequent guanine-N-7 methylation (By similarity). In the replication mode, the polymerase replicates the whole viral genome without recognizing the gene end transcriptional signals. The ability of the polymerase to override the gene end signals as it is producing the antigenome is probably due to replicative RNA becoming encapsidated with nucleoprotein as it is synthesized (By similarity).</text>
</comment>
<comment type="catalytic activity">
    <reaction evidence="4">
        <text>RNA(n) + a ribonucleoside 5'-triphosphate = RNA(n+1) + diphosphate</text>
        <dbReference type="Rhea" id="RHEA:21248"/>
        <dbReference type="Rhea" id="RHEA-COMP:14527"/>
        <dbReference type="Rhea" id="RHEA-COMP:17342"/>
        <dbReference type="ChEBI" id="CHEBI:33019"/>
        <dbReference type="ChEBI" id="CHEBI:61557"/>
        <dbReference type="ChEBI" id="CHEBI:140395"/>
        <dbReference type="EC" id="2.7.7.48"/>
    </reaction>
</comment>
<comment type="catalytic activity">
    <reaction evidence="2">
        <text>GTP + H2O = GDP + phosphate + H(+)</text>
        <dbReference type="Rhea" id="RHEA:19669"/>
        <dbReference type="ChEBI" id="CHEBI:15377"/>
        <dbReference type="ChEBI" id="CHEBI:15378"/>
        <dbReference type="ChEBI" id="CHEBI:37565"/>
        <dbReference type="ChEBI" id="CHEBI:43474"/>
        <dbReference type="ChEBI" id="CHEBI:58189"/>
    </reaction>
</comment>
<comment type="catalytic activity">
    <reaction evidence="2">
        <text>a 5'-end triphospho-adenylyl-adenylyl-cytidylyl-adenosine in mRNA + GDP + H(+) = a 5'-end (5'-triphosphoguanosine)-adenylyl-adenylyl-cytidylyl-adenosine in mRNA + diphosphate</text>
        <dbReference type="Rhea" id="RHEA:65436"/>
        <dbReference type="Rhea" id="RHEA-COMP:16797"/>
        <dbReference type="Rhea" id="RHEA-COMP:16799"/>
        <dbReference type="ChEBI" id="CHEBI:15378"/>
        <dbReference type="ChEBI" id="CHEBI:33019"/>
        <dbReference type="ChEBI" id="CHEBI:58189"/>
        <dbReference type="ChEBI" id="CHEBI:156484"/>
        <dbReference type="ChEBI" id="CHEBI:156503"/>
        <dbReference type="EC" id="2.7.7.88"/>
    </reaction>
</comment>
<comment type="catalytic activity">
    <reaction evidence="1">
        <text>a 5'-end (5'-triphosphoguanosine)-adenylyl-adenylyl-cytidylyl-adenosine in mRNA + 2 S-adenosyl-L-methionine = a 5'-end (N(7)-methyl 5'-triphosphoguanosine)-(2'-O-methyladenylyl)-adenylyl-cytidylyl-adenosine in mRNA + 2 S-adenosyl-L-homocysteine + H(+)</text>
        <dbReference type="Rhea" id="RHEA:65376"/>
        <dbReference type="Rhea" id="RHEA-COMP:16797"/>
        <dbReference type="Rhea" id="RHEA-COMP:16798"/>
        <dbReference type="ChEBI" id="CHEBI:15378"/>
        <dbReference type="ChEBI" id="CHEBI:57856"/>
        <dbReference type="ChEBI" id="CHEBI:59789"/>
        <dbReference type="ChEBI" id="CHEBI:156483"/>
        <dbReference type="ChEBI" id="CHEBI:156484"/>
        <dbReference type="EC" id="2.1.1.375"/>
    </reaction>
</comment>
<comment type="catalytic activity">
    <reaction evidence="1">
        <text>a 5'-end (5'-triphosphoguanosine)-adenylyl-adenylyl-cytidylyl-adenosine in mRNA + S-adenosyl-L-methionine = a 5'-end (5'-triphosphoguanosine)-(2'-O-methyladenylyl)-adenylyl-cytidylyl-adenosine in mRNA + S-adenosyl-L-homocysteine + H(+)</text>
        <dbReference type="Rhea" id="RHEA:65380"/>
        <dbReference type="Rhea" id="RHEA-COMP:16797"/>
        <dbReference type="Rhea" id="RHEA-COMP:16801"/>
        <dbReference type="ChEBI" id="CHEBI:15378"/>
        <dbReference type="ChEBI" id="CHEBI:57856"/>
        <dbReference type="ChEBI" id="CHEBI:59789"/>
        <dbReference type="ChEBI" id="CHEBI:156482"/>
        <dbReference type="ChEBI" id="CHEBI:156484"/>
    </reaction>
</comment>
<comment type="catalytic activity">
    <reaction evidence="1">
        <text>a 5'-end (5'-triphosphoguanosine)-(2'-O-methyladenylyl)-adenylyl-cytidylyl-adenosine in mRNA + S-adenosyl-L-methionine = a 5'-end (N(7)-methyl 5'-triphosphoguanosine)-(2'-O-methyladenylyl)-adenylyl-cytidylyl-adenosine in mRNA + S-adenosyl-L-homocysteine</text>
        <dbReference type="Rhea" id="RHEA:65440"/>
        <dbReference type="Rhea" id="RHEA-COMP:16798"/>
        <dbReference type="Rhea" id="RHEA-COMP:16801"/>
        <dbReference type="ChEBI" id="CHEBI:57856"/>
        <dbReference type="ChEBI" id="CHEBI:59789"/>
        <dbReference type="ChEBI" id="CHEBI:156482"/>
        <dbReference type="ChEBI" id="CHEBI:156483"/>
    </reaction>
</comment>
<comment type="cofactor">
    <cofactor evidence="2">
        <name>Mg(2+)</name>
        <dbReference type="ChEBI" id="CHEBI:18420"/>
    </cofactor>
    <text evidence="2">For RNA-directed RNA polymerase activity. Mn(2+) can stimulate de novo initiation but it is inefficient at supporting elongation of de novo initiated RNA.</text>
</comment>
<comment type="subunit">
    <text evidence="2">Interacts with the phosphoprotein (via C-terminus); the association of P and L forms the polymerase complex.</text>
</comment>
<comment type="subcellular location">
    <subcellularLocation>
        <location evidence="2">Virion</location>
    </subcellularLocation>
    <subcellularLocation>
        <location evidence="2">Host cytoplasm</location>
    </subcellularLocation>
    <text evidence="2">Localizes in cytoplasmic inclusion bodies.</text>
</comment>
<comment type="domain">
    <text evidence="2">Contains an RNA-dependent RNA polymerase (RdRp) domain, a polyribonucleotidyl transferase (PRNTase or capping) domain and a methyltransferase (MTase) domain.</text>
</comment>
<comment type="similarity">
    <text evidence="6">Belongs to the paramyxovirus L protein family.</text>
</comment>
<evidence type="ECO:0000250" key="1">
    <source>
        <dbReference type="UniProtKB" id="P03523"/>
    </source>
</evidence>
<evidence type="ECO:0000250" key="2">
    <source>
        <dbReference type="UniProtKB" id="P28887"/>
    </source>
</evidence>
<evidence type="ECO:0000250" key="3">
    <source>
        <dbReference type="UniProtKB" id="Q6WB93"/>
    </source>
</evidence>
<evidence type="ECO:0000255" key="4">
    <source>
        <dbReference type="PROSITE-ProRule" id="PRU00539"/>
    </source>
</evidence>
<evidence type="ECO:0000255" key="5">
    <source>
        <dbReference type="PROSITE-ProRule" id="PRU00923"/>
    </source>
</evidence>
<evidence type="ECO:0000305" key="6"/>
<feature type="chain" id="PRO_0000365788" description="RNA-directed RNA polymerase L">
    <location>
        <begin position="1"/>
        <end position="2040"/>
    </location>
</feature>
<feature type="domain" description="RdRp catalytic" evidence="4">
    <location>
        <begin position="640"/>
        <end position="822"/>
    </location>
</feature>
<feature type="domain" description="Mononegavirus-type SAM-dependent 2'-O-MTase" evidence="5">
    <location>
        <begin position="1694"/>
        <end position="1884"/>
    </location>
</feature>
<feature type="region of interest" description="GDP polyribonucleotidyltransferase" evidence="2">
    <location>
        <begin position="913"/>
        <end position="1395"/>
    </location>
</feature>
<feature type="active site" description="Nucleophile; for GDP polyribonucleotidyltransferase activity" evidence="1">
    <location>
        <position position="1273"/>
    </location>
</feature>
<feature type="active site" description="For mRNA (nucleoside-2'-O-)-methyltransferase activity" evidence="3">
    <location>
        <position position="1705"/>
    </location>
</feature>
<feature type="active site" description="For mRNA (nucleoside-2'-O-)-methyltransferase activity" evidence="3">
    <location>
        <position position="1811"/>
    </location>
</feature>
<feature type="active site" description="For mRNA (nucleoside-2'-O-)-methyltransferase activity" evidence="3">
    <location>
        <position position="1849"/>
    </location>
</feature>
<feature type="active site" description="For mRNA (nucleoside-2'-O-)-methyltransferase activity" evidence="3">
    <location>
        <position position="1880"/>
    </location>
</feature>
<feature type="binding site" evidence="2">
    <location>
        <position position="647"/>
    </location>
    <ligand>
        <name>Mg(2+)</name>
        <dbReference type="ChEBI" id="CHEBI:18420"/>
        <note>catalytic; for RNA-directed RNA polymerase activity</note>
    </ligand>
</feature>
<feature type="binding site" evidence="2">
    <location>
        <position position="757"/>
    </location>
    <ligand>
        <name>Mg(2+)</name>
        <dbReference type="ChEBI" id="CHEBI:18420"/>
        <note>catalytic; for RNA-directed RNA polymerase activity</note>
    </ligand>
</feature>
<feature type="binding site" evidence="3">
    <location>
        <begin position="1728"/>
        <end position="1732"/>
    </location>
    <ligand>
        <name>substrate</name>
        <note>for mRNA (nucleoside-2'-O-)-methyltransferase activity</note>
    </ligand>
</feature>
<feature type="sequence variant">
    <original>I</original>
    <variation>L</variation>
    <location>
        <position position="1931"/>
    </location>
</feature>
<organism>
    <name type="scientific">Murine pneumonia virus (strain 15)</name>
    <name type="common">MPV</name>
    <dbReference type="NCBI Taxonomy" id="296738"/>
    <lineage>
        <taxon>Viruses</taxon>
        <taxon>Riboviria</taxon>
        <taxon>Orthornavirae</taxon>
        <taxon>Negarnaviricota</taxon>
        <taxon>Haploviricotina</taxon>
        <taxon>Monjiviricetes</taxon>
        <taxon>Mononegavirales</taxon>
        <taxon>Pneumoviridae</taxon>
        <taxon>Orthopneumovirus</taxon>
        <taxon>Orthopneumovirus muris</taxon>
        <taxon>murine pneumonia virus</taxon>
    </lineage>
</organism>
<gene>
    <name type="primary">L</name>
</gene>
<reference key="1">
    <citation type="journal article" date="2005" name="Virus Genes">
        <title>Complete sequence of the RNA genome of pneumonia virus of mice (PVM).</title>
        <authorList>
            <person name="Krempl C.D."/>
            <person name="Lamirande E.W."/>
            <person name="Collins P.L."/>
        </authorList>
    </citation>
    <scope>NUCLEOTIDE SEQUENCE [GENOMIC RNA]</scope>
    <source>
        <strain>15</strain>
    </source>
</reference>
<reference key="2">
    <citation type="journal article" date="2005" name="J. Gen. Virol.">
        <title>Genome sequence of the non-pathogenic strain 15 of pneumonia virus of mice and comparison with the genome of the pathogenic strain J3666.</title>
        <authorList>
            <person name="Thorpe L.C."/>
            <person name="Easton A.J."/>
        </authorList>
    </citation>
    <scope>NUCLEOTIDE SEQUENCE [GENOMIC RNA]</scope>
    <source>
        <strain>15</strain>
    </source>
</reference>
<organismHost>
    <name type="scientific">Mus musculus</name>
    <name type="common">Mouse</name>
    <dbReference type="NCBI Taxonomy" id="10090"/>
</organismHost>
<proteinExistence type="inferred from homology"/>
<dbReference type="EC" id="2.7.7.48" evidence="2"/>
<dbReference type="EC" id="3.6.1.-" evidence="2"/>
<dbReference type="EC" id="2.7.7.88" evidence="2"/>
<dbReference type="EC" id="2.1.1.375" evidence="1"/>
<dbReference type="EMBL" id="AY729016">
    <property type="protein sequence ID" value="AAW79184.1"/>
    <property type="molecule type" value="Genomic_RNA"/>
</dbReference>
<dbReference type="EMBL" id="AY743910">
    <property type="protein sequence ID" value="AAW02843.1"/>
    <property type="molecule type" value="Genomic_RNA"/>
</dbReference>
<dbReference type="SMR" id="Q50EW2"/>
<dbReference type="Proteomes" id="UP000133604">
    <property type="component" value="Genome"/>
</dbReference>
<dbReference type="Proteomes" id="UP000147186">
    <property type="component" value="Segment"/>
</dbReference>
<dbReference type="GO" id="GO:0030430">
    <property type="term" value="C:host cell cytoplasm"/>
    <property type="evidence" value="ECO:0007669"/>
    <property type="project" value="UniProtKB-SubCell"/>
</dbReference>
<dbReference type="GO" id="GO:0044423">
    <property type="term" value="C:virion component"/>
    <property type="evidence" value="ECO:0007669"/>
    <property type="project" value="UniProtKB-KW"/>
</dbReference>
<dbReference type="GO" id="GO:0005524">
    <property type="term" value="F:ATP binding"/>
    <property type="evidence" value="ECO:0007669"/>
    <property type="project" value="UniProtKB-KW"/>
</dbReference>
<dbReference type="GO" id="GO:0003924">
    <property type="term" value="F:GTPase activity"/>
    <property type="evidence" value="ECO:0007669"/>
    <property type="project" value="RHEA"/>
</dbReference>
<dbReference type="GO" id="GO:0046872">
    <property type="term" value="F:metal ion binding"/>
    <property type="evidence" value="ECO:0007669"/>
    <property type="project" value="UniProtKB-KW"/>
</dbReference>
<dbReference type="GO" id="GO:0004482">
    <property type="term" value="F:mRNA 5'-cap (guanine-N7-)-methyltransferase activity"/>
    <property type="evidence" value="ECO:0007669"/>
    <property type="project" value="InterPro"/>
</dbReference>
<dbReference type="GO" id="GO:0003968">
    <property type="term" value="F:RNA-directed RNA polymerase activity"/>
    <property type="evidence" value="ECO:0007669"/>
    <property type="project" value="UniProtKB-KW"/>
</dbReference>
<dbReference type="InterPro" id="IPR039530">
    <property type="entry name" value="L_methyltransferase_rhabdo"/>
</dbReference>
<dbReference type="InterPro" id="IPR039736">
    <property type="entry name" value="L_poly_C"/>
</dbReference>
<dbReference type="InterPro" id="IPR026890">
    <property type="entry name" value="Mononeg_mRNAcap"/>
</dbReference>
<dbReference type="InterPro" id="IPR014023">
    <property type="entry name" value="Mononeg_RNA_pol_cat"/>
</dbReference>
<dbReference type="InterPro" id="IPR025786">
    <property type="entry name" value="Mononega_L_MeTrfase"/>
</dbReference>
<dbReference type="NCBIfam" id="TIGR04198">
    <property type="entry name" value="paramyx_RNAcap"/>
    <property type="match status" value="1"/>
</dbReference>
<dbReference type="Pfam" id="PF14314">
    <property type="entry name" value="Methyltrans_Mon_2nd"/>
    <property type="match status" value="1"/>
</dbReference>
<dbReference type="Pfam" id="PF14318">
    <property type="entry name" value="Mononeg_mRNAcap"/>
    <property type="match status" value="1"/>
</dbReference>
<dbReference type="Pfam" id="PF00946">
    <property type="entry name" value="Mononeg_RNA_pol"/>
    <property type="match status" value="1"/>
</dbReference>
<dbReference type="PROSITE" id="PS50526">
    <property type="entry name" value="RDRP_SSRNA_NEG_NONSEG"/>
    <property type="match status" value="1"/>
</dbReference>
<dbReference type="PROSITE" id="PS51590">
    <property type="entry name" value="SAM_MT_MNV_L"/>
    <property type="match status" value="1"/>
</dbReference>
<keyword id="KW-0067">ATP-binding</keyword>
<keyword id="KW-1035">Host cytoplasm</keyword>
<keyword id="KW-0378">Hydrolase</keyword>
<keyword id="KW-0460">Magnesium</keyword>
<keyword id="KW-0479">Metal-binding</keyword>
<keyword id="KW-0489">Methyltransferase</keyword>
<keyword id="KW-0506">mRNA capping</keyword>
<keyword id="KW-0507">mRNA processing</keyword>
<keyword id="KW-0511">Multifunctional enzyme</keyword>
<keyword id="KW-0547">Nucleotide-binding</keyword>
<keyword id="KW-0548">Nucleotidyltransferase</keyword>
<keyword id="KW-1185">Reference proteome</keyword>
<keyword id="KW-0696">RNA-directed RNA polymerase</keyword>
<keyword id="KW-0949">S-adenosyl-L-methionine</keyword>
<keyword id="KW-0808">Transferase</keyword>
<keyword id="KW-0693">Viral RNA replication</keyword>
<keyword id="KW-0946">Virion</keyword>
<accession>Q50EW2</accession>
<accession>Q5MKL9</accession>
<name>L_MPV15</name>